<evidence type="ECO:0000250" key="1">
    <source>
        <dbReference type="UniProtKB" id="Q9QUR8"/>
    </source>
</evidence>
<evidence type="ECO:0000255" key="2"/>
<evidence type="ECO:0000255" key="3">
    <source>
        <dbReference type="PROSITE-ProRule" id="PRU00352"/>
    </source>
</evidence>
<evidence type="ECO:0000256" key="4">
    <source>
        <dbReference type="SAM" id="MobiDB-lite"/>
    </source>
</evidence>
<evidence type="ECO:0000269" key="5">
    <source>
    </source>
</evidence>
<evidence type="ECO:0000269" key="6">
    <source>
    </source>
</evidence>
<evidence type="ECO:0000269" key="7">
    <source>
    </source>
</evidence>
<evidence type="ECO:0000269" key="8">
    <source>
    </source>
</evidence>
<evidence type="ECO:0000269" key="9">
    <source>
    </source>
</evidence>
<evidence type="ECO:0000269" key="10">
    <source>
    </source>
</evidence>
<evidence type="ECO:0000269" key="11">
    <source>
    </source>
</evidence>
<evidence type="ECO:0000269" key="12">
    <source>
    </source>
</evidence>
<evidence type="ECO:0000269" key="13">
    <source>
    </source>
</evidence>
<evidence type="ECO:0000269" key="14">
    <source ref="6"/>
</evidence>
<evidence type="ECO:0000303" key="15">
    <source>
    </source>
</evidence>
<evidence type="ECO:0000305" key="16"/>
<evidence type="ECO:0000305" key="17">
    <source>
    </source>
</evidence>
<evidence type="ECO:0007829" key="18">
    <source>
        <dbReference type="PDB" id="3NVQ"/>
    </source>
</evidence>
<reference key="1">
    <citation type="journal article" date="1998" name="Genomics">
        <title>New eukaryotic semaphorins with close homology to semaphorins of DNA viruses.</title>
        <authorList>
            <person name="Lange C."/>
            <person name="Liehr T."/>
            <person name="Goen M."/>
            <person name="Gebhart E."/>
            <person name="Fleckenstein B."/>
            <person name="Ensser A."/>
        </authorList>
    </citation>
    <scope>NUCLEOTIDE SEQUENCE [GENOMIC DNA / MRNA] (ISOFORM 1)</scope>
</reference>
<reference key="2">
    <citation type="journal article" date="1999" name="J. Immunol.">
        <title>Molecular cloning of a glycosylphosphatidylinositol-anchored molecule CDw108.</title>
        <authorList>
            <person name="Yamada A."/>
            <person name="Kubo K."/>
            <person name="Takeshita T."/>
            <person name="Harashima N."/>
            <person name="Kawano K."/>
            <person name="Mine T."/>
            <person name="Sagawa K."/>
            <person name="Sugamura K."/>
            <person name="Itoh K."/>
        </authorList>
    </citation>
    <scope>NUCLEOTIDE SEQUENCE [MRNA] (ISOFORM 1)</scope>
    <scope>SUBCELLULAR LOCATION</scope>
    <scope>GLYCOSYLATION</scope>
    <scope>TISSUE SPECIFICITY</scope>
</reference>
<reference key="3">
    <citation type="journal article" date="1998" name="J. Biol. Chem.">
        <title>Human semaphorin K1 is glycosylphosphatidylinositol-linked and defines a new subfamily of viral-related semaphorins.</title>
        <authorList>
            <person name="Xu X."/>
            <person name="Ng S."/>
            <person name="Wu Z.-L."/>
            <person name="Nguyen D."/>
            <person name="Homburger S."/>
            <person name="Seidel-Dugan C."/>
            <person name="Ebens A."/>
            <person name="Luo Y."/>
        </authorList>
    </citation>
    <scope>NUCLEOTIDE SEQUENCE [MRNA] (ISOFORM 1)</scope>
    <scope>SUBCELLULAR LOCATION</scope>
    <scope>TISSUE SPECIFICITY</scope>
    <source>
        <tissue>Placenta</tissue>
    </source>
</reference>
<reference key="4">
    <citation type="journal article" date="2007" name="Transfusion">
        <title>The molecular diversity of Sema7A, the semaphorin that carries the JMH blood group antigens.</title>
        <authorList>
            <person name="Seltsam A."/>
            <person name="Strigens S."/>
            <person name="Levene C."/>
            <person name="Yahalom V."/>
            <person name="Moulds M."/>
            <person name="Moulds J.J."/>
            <person name="Hustinx H."/>
            <person name="Weisbach V."/>
            <person name="Figueroa D."/>
            <person name="Bade-Doeding C."/>
            <person name="DeLuca D.S."/>
            <person name="Blasczyk R."/>
        </authorList>
    </citation>
    <scope>NUCLEOTIDE SEQUENCE [MRNA] (ISOFORM 1)</scope>
    <scope>POLYMORPHISM</scope>
    <scope>VARIANTS GLN-207; TRP-207; HIS-460 AND CYS-461</scope>
    <source>
        <tissue>Peripheral blood</tissue>
    </source>
</reference>
<reference key="5">
    <citation type="journal article" date="2004" name="Nat. Genet.">
        <title>Complete sequencing and characterization of 21,243 full-length human cDNAs.</title>
        <authorList>
            <person name="Ota T."/>
            <person name="Suzuki Y."/>
            <person name="Nishikawa T."/>
            <person name="Otsuki T."/>
            <person name="Sugiyama T."/>
            <person name="Irie R."/>
            <person name="Wakamatsu A."/>
            <person name="Hayashi K."/>
            <person name="Sato H."/>
            <person name="Nagai K."/>
            <person name="Kimura K."/>
            <person name="Makita H."/>
            <person name="Sekine M."/>
            <person name="Obayashi M."/>
            <person name="Nishi T."/>
            <person name="Shibahara T."/>
            <person name="Tanaka T."/>
            <person name="Ishii S."/>
            <person name="Yamamoto J."/>
            <person name="Saito K."/>
            <person name="Kawai Y."/>
            <person name="Isono Y."/>
            <person name="Nakamura Y."/>
            <person name="Nagahari K."/>
            <person name="Murakami K."/>
            <person name="Yasuda T."/>
            <person name="Iwayanagi T."/>
            <person name="Wagatsuma M."/>
            <person name="Shiratori A."/>
            <person name="Sudo H."/>
            <person name="Hosoiri T."/>
            <person name="Kaku Y."/>
            <person name="Kodaira H."/>
            <person name="Kondo H."/>
            <person name="Sugawara M."/>
            <person name="Takahashi M."/>
            <person name="Kanda K."/>
            <person name="Yokoi T."/>
            <person name="Furuya T."/>
            <person name="Kikkawa E."/>
            <person name="Omura Y."/>
            <person name="Abe K."/>
            <person name="Kamihara K."/>
            <person name="Katsuta N."/>
            <person name="Sato K."/>
            <person name="Tanikawa M."/>
            <person name="Yamazaki M."/>
            <person name="Ninomiya K."/>
            <person name="Ishibashi T."/>
            <person name="Yamashita H."/>
            <person name="Murakawa K."/>
            <person name="Fujimori K."/>
            <person name="Tanai H."/>
            <person name="Kimata M."/>
            <person name="Watanabe M."/>
            <person name="Hiraoka S."/>
            <person name="Chiba Y."/>
            <person name="Ishida S."/>
            <person name="Ono Y."/>
            <person name="Takiguchi S."/>
            <person name="Watanabe S."/>
            <person name="Yosida M."/>
            <person name="Hotuta T."/>
            <person name="Kusano J."/>
            <person name="Kanehori K."/>
            <person name="Takahashi-Fujii A."/>
            <person name="Hara H."/>
            <person name="Tanase T.-O."/>
            <person name="Nomura Y."/>
            <person name="Togiya S."/>
            <person name="Komai F."/>
            <person name="Hara R."/>
            <person name="Takeuchi K."/>
            <person name="Arita M."/>
            <person name="Imose N."/>
            <person name="Musashino K."/>
            <person name="Yuuki H."/>
            <person name="Oshima A."/>
            <person name="Sasaki N."/>
            <person name="Aotsuka S."/>
            <person name="Yoshikawa Y."/>
            <person name="Matsunawa H."/>
            <person name="Ichihara T."/>
            <person name="Shiohata N."/>
            <person name="Sano S."/>
            <person name="Moriya S."/>
            <person name="Momiyama H."/>
            <person name="Satoh N."/>
            <person name="Takami S."/>
            <person name="Terashima Y."/>
            <person name="Suzuki O."/>
            <person name="Nakagawa S."/>
            <person name="Senoh A."/>
            <person name="Mizoguchi H."/>
            <person name="Goto Y."/>
            <person name="Shimizu F."/>
            <person name="Wakebe H."/>
            <person name="Hishigaki H."/>
            <person name="Watanabe T."/>
            <person name="Sugiyama A."/>
            <person name="Takemoto M."/>
            <person name="Kawakami B."/>
            <person name="Yamazaki M."/>
            <person name="Watanabe K."/>
            <person name="Kumagai A."/>
            <person name="Itakura S."/>
            <person name="Fukuzumi Y."/>
            <person name="Fujimori Y."/>
            <person name="Komiyama M."/>
            <person name="Tashiro H."/>
            <person name="Tanigami A."/>
            <person name="Fujiwara T."/>
            <person name="Ono T."/>
            <person name="Yamada K."/>
            <person name="Fujii Y."/>
            <person name="Ozaki K."/>
            <person name="Hirao M."/>
            <person name="Ohmori Y."/>
            <person name="Kawabata A."/>
            <person name="Hikiji T."/>
            <person name="Kobatake N."/>
            <person name="Inagaki H."/>
            <person name="Ikema Y."/>
            <person name="Okamoto S."/>
            <person name="Okitani R."/>
            <person name="Kawakami T."/>
            <person name="Noguchi S."/>
            <person name="Itoh T."/>
            <person name="Shigeta K."/>
            <person name="Senba T."/>
            <person name="Matsumura K."/>
            <person name="Nakajima Y."/>
            <person name="Mizuno T."/>
            <person name="Morinaga M."/>
            <person name="Sasaki M."/>
            <person name="Togashi T."/>
            <person name="Oyama M."/>
            <person name="Hata H."/>
            <person name="Watanabe M."/>
            <person name="Komatsu T."/>
            <person name="Mizushima-Sugano J."/>
            <person name="Satoh T."/>
            <person name="Shirai Y."/>
            <person name="Takahashi Y."/>
            <person name="Nakagawa K."/>
            <person name="Okumura K."/>
            <person name="Nagase T."/>
            <person name="Nomura N."/>
            <person name="Kikuchi H."/>
            <person name="Masuho Y."/>
            <person name="Yamashita R."/>
            <person name="Nakai K."/>
            <person name="Yada T."/>
            <person name="Nakamura Y."/>
            <person name="Ohara O."/>
            <person name="Isogai T."/>
            <person name="Sugano S."/>
        </authorList>
    </citation>
    <scope>NUCLEOTIDE SEQUENCE [LARGE SCALE MRNA] (ISOFORM 2)</scope>
</reference>
<reference key="6">
    <citation type="submission" date="2005-01" db="EMBL/GenBank/DDBJ databases">
        <authorList>
            <consortium name="SeattleSNPs variation discovery resource"/>
        </authorList>
    </citation>
    <scope>NUCLEOTIDE SEQUENCE [GENOMIC DNA]</scope>
    <scope>VARIANT THR-115</scope>
</reference>
<reference key="7">
    <citation type="journal article" date="2006" name="Nature">
        <title>Analysis of the DNA sequence and duplication history of human chromosome 15.</title>
        <authorList>
            <person name="Zody M.C."/>
            <person name="Garber M."/>
            <person name="Sharpe T."/>
            <person name="Young S.K."/>
            <person name="Rowen L."/>
            <person name="O'Neill K."/>
            <person name="Whittaker C.A."/>
            <person name="Kamal M."/>
            <person name="Chang J.L."/>
            <person name="Cuomo C.A."/>
            <person name="Dewar K."/>
            <person name="FitzGerald M.G."/>
            <person name="Kodira C.D."/>
            <person name="Madan A."/>
            <person name="Qin S."/>
            <person name="Yang X."/>
            <person name="Abbasi N."/>
            <person name="Abouelleil A."/>
            <person name="Arachchi H.M."/>
            <person name="Baradarani L."/>
            <person name="Birditt B."/>
            <person name="Bloom S."/>
            <person name="Bloom T."/>
            <person name="Borowsky M.L."/>
            <person name="Burke J."/>
            <person name="Butler J."/>
            <person name="Cook A."/>
            <person name="DeArellano K."/>
            <person name="DeCaprio D."/>
            <person name="Dorris L. III"/>
            <person name="Dors M."/>
            <person name="Eichler E.E."/>
            <person name="Engels R."/>
            <person name="Fahey J."/>
            <person name="Fleetwood P."/>
            <person name="Friedman C."/>
            <person name="Gearin G."/>
            <person name="Hall J.L."/>
            <person name="Hensley G."/>
            <person name="Johnson E."/>
            <person name="Jones C."/>
            <person name="Kamat A."/>
            <person name="Kaur A."/>
            <person name="Locke D.P."/>
            <person name="Madan A."/>
            <person name="Munson G."/>
            <person name="Jaffe D.B."/>
            <person name="Lui A."/>
            <person name="Macdonald P."/>
            <person name="Mauceli E."/>
            <person name="Naylor J.W."/>
            <person name="Nesbitt R."/>
            <person name="Nicol R."/>
            <person name="O'Leary S.B."/>
            <person name="Ratcliffe A."/>
            <person name="Rounsley S."/>
            <person name="She X."/>
            <person name="Sneddon K.M.B."/>
            <person name="Stewart S."/>
            <person name="Sougnez C."/>
            <person name="Stone S.M."/>
            <person name="Topham K."/>
            <person name="Vincent D."/>
            <person name="Wang S."/>
            <person name="Zimmer A.R."/>
            <person name="Birren B.W."/>
            <person name="Hood L."/>
            <person name="Lander E.S."/>
            <person name="Nusbaum C."/>
        </authorList>
    </citation>
    <scope>NUCLEOTIDE SEQUENCE [LARGE SCALE GENOMIC DNA]</scope>
</reference>
<reference key="8">
    <citation type="journal article" date="2004" name="Genome Res.">
        <title>The status, quality, and expansion of the NIH full-length cDNA project: the Mammalian Gene Collection (MGC).</title>
        <authorList>
            <consortium name="The MGC Project Team"/>
        </authorList>
    </citation>
    <scope>NUCLEOTIDE SEQUENCE [LARGE SCALE MRNA] (ISOFORM 1)</scope>
    <source>
        <tissue>Brain cortex</tissue>
    </source>
</reference>
<reference key="9">
    <citation type="journal article" date="1999" name="Immunobiology">
        <title>Characterization of the human leukocyte GPI-anchored glycoprotein CDw108 and its relation to other similar molecules.</title>
        <authorList>
            <person name="Angelisova P."/>
            <person name="Drbal K."/>
            <person name="Cerny J."/>
            <person name="Hilgert I."/>
            <person name="Horejsi V."/>
        </authorList>
    </citation>
    <scope>CHARACTERIZATION</scope>
</reference>
<reference key="10">
    <citation type="journal article" date="2003" name="Nature">
        <title>Semaphorin 7A promotes axon outgrowth through integrins and MAPKs.</title>
        <authorList>
            <person name="Pasterkamp R.J."/>
            <person name="Peschon J.J."/>
            <person name="Spriggs M.K."/>
            <person name="Kolodkin A.L."/>
        </authorList>
    </citation>
    <scope>FUNCTION</scope>
    <scope>INTERACTION WITH ITGB1</scope>
    <scope>MUTAGENESIS OF ARG-267 AND ASP-269</scope>
</reference>
<reference key="11">
    <citation type="journal article" date="2007" name="Nature">
        <title>Semaphorin 7A initiates T-cell-mediated inflammatory responses through alpha1beta1 integrin.</title>
        <authorList>
            <person name="Suzuki K."/>
            <person name="Okuno T."/>
            <person name="Yamamoto M."/>
            <person name="Pasterkamp R.J."/>
            <person name="Takegahara N."/>
            <person name="Takamatsu H."/>
            <person name="Kitao T."/>
            <person name="Takagi J."/>
            <person name="Rennert P.D."/>
            <person name="Kolodkin A.L."/>
            <person name="Kumanogoh A."/>
            <person name="Kikutani H."/>
        </authorList>
    </citation>
    <scope>FUNCTION</scope>
    <scope>INTERACTION WITH ITGA1 AND ITGB1</scope>
</reference>
<reference key="12">
    <citation type="journal article" date="2008" name="J. Invest. Dermatol.">
        <title>Semaphorin 7a promotes spreading and dendricity in human melanocytes through beta1-integrins.</title>
        <authorList>
            <person name="Scott G.A."/>
            <person name="McClelland L.A."/>
            <person name="Fricke A.F."/>
        </authorList>
    </citation>
    <scope>FUNCTION</scope>
    <scope>SUBCELLULAR LOCATION</scope>
    <scope>INTERACTION WITH ITGB1</scope>
    <scope>INDUCTION</scope>
    <scope>TISSUE SPECIFICITY</scope>
</reference>
<reference key="13">
    <citation type="journal article" date="2010" name="Cell">
        <title>Structural basis of semaphorin-plexin recognition and viral mimicry from Sema7A and A39R complexes with PlexinC1.</title>
        <authorList>
            <person name="Liu H."/>
            <person name="Juo Z.S."/>
            <person name="Shim A.H."/>
            <person name="Focia P.J."/>
            <person name="Chen X."/>
            <person name="Garcia K.C."/>
            <person name="He X."/>
        </authorList>
    </citation>
    <scope>X-RAY CRYSTALLOGRAPHY (2.4 ANGSTROMS) OF 45-634 IN COMPLEX WITH PLXNC1</scope>
    <scope>SUBUNIT</scope>
    <scope>DISULFIDE BONDS</scope>
    <scope>GLYCOSYLATION AT ASN-105; ASN-157; ASN-258 AND ASN-330</scope>
</reference>
<reference key="14">
    <citation type="journal article" date="2011" name="Vox Sang.">
        <title>A new SEMA7A variant found in Native Americans with alloantibody.</title>
        <authorList>
            <person name="Richard M."/>
            <person name="St-Laurent J."/>
            <person name="Perreault J."/>
            <person name="Long A."/>
            <person name="St-Louis M."/>
        </authorList>
    </citation>
    <scope>VARIANT LEU-347</scope>
</reference>
<reference key="15">
    <citation type="journal article" date="2021" name="EMBO Mol. Med.">
        <title>A homozygous R148W mutation in Semaphorin 7A causes progressive familial intrahepatic cholestasis.</title>
        <authorList>
            <person name="Pan Q."/>
            <person name="Luo G."/>
            <person name="Qu J."/>
            <person name="Chen S."/>
            <person name="Zhang X."/>
            <person name="Zhao N."/>
            <person name="Ding J."/>
            <person name="Yang H."/>
            <person name="Li M."/>
            <person name="Li L."/>
            <person name="Cheng Y."/>
            <person name="Li X."/>
            <person name="Xie Q."/>
            <person name="Li Q."/>
            <person name="Zhou X."/>
            <person name="Zou H."/>
            <person name="Fan S."/>
            <person name="Zou L."/>
            <person name="Liu W."/>
            <person name="Deng G."/>
            <person name="Cai S.Y."/>
            <person name="Boyer J.L."/>
            <person name="Chai J."/>
        </authorList>
    </citation>
    <scope>VARIANT PFIC11 TRP-148</scope>
    <scope>INVOLVEMENT IN PFIC11</scope>
</reference>
<dbReference type="EMBL" id="AF030698">
    <property type="protein sequence ID" value="AAC34261.1"/>
    <property type="molecule type" value="mRNA"/>
</dbReference>
<dbReference type="EMBL" id="AF030697">
    <property type="protein sequence ID" value="AAC34741.1"/>
    <property type="molecule type" value="Genomic_DNA"/>
</dbReference>
<dbReference type="EMBL" id="AF069493">
    <property type="protein sequence ID" value="AAC82642.1"/>
    <property type="molecule type" value="mRNA"/>
</dbReference>
<dbReference type="EMBL" id="AF071542">
    <property type="protein sequence ID" value="AAC80456.1"/>
    <property type="molecule type" value="mRNA"/>
</dbReference>
<dbReference type="EMBL" id="AM180445">
    <property type="protein sequence ID" value="CAJ55398.1"/>
    <property type="molecule type" value="mRNA"/>
</dbReference>
<dbReference type="EMBL" id="AM180446">
    <property type="protein sequence ID" value="CAJ55399.1"/>
    <property type="molecule type" value="mRNA"/>
</dbReference>
<dbReference type="EMBL" id="AM180447">
    <property type="protein sequence ID" value="CAJ55400.1"/>
    <property type="molecule type" value="mRNA"/>
</dbReference>
<dbReference type="EMBL" id="AM180448">
    <property type="protein sequence ID" value="CAJ55401.1"/>
    <property type="molecule type" value="mRNA"/>
</dbReference>
<dbReference type="EMBL" id="AM180449">
    <property type="protein sequence ID" value="CAJ55402.1"/>
    <property type="molecule type" value="mRNA"/>
</dbReference>
<dbReference type="EMBL" id="AM180450">
    <property type="protein sequence ID" value="CAJ55403.1"/>
    <property type="molecule type" value="mRNA"/>
</dbReference>
<dbReference type="EMBL" id="AM180451">
    <property type="protein sequence ID" value="CAJ55404.1"/>
    <property type="molecule type" value="mRNA"/>
</dbReference>
<dbReference type="EMBL" id="AK293280">
    <property type="protein sequence ID" value="BAG56808.1"/>
    <property type="molecule type" value="mRNA"/>
</dbReference>
<dbReference type="EMBL" id="AY885237">
    <property type="protein sequence ID" value="AAW62253.1"/>
    <property type="molecule type" value="Genomic_DNA"/>
</dbReference>
<dbReference type="EMBL" id="AC012435">
    <property type="status" value="NOT_ANNOTATED_CDS"/>
    <property type="molecule type" value="Genomic_DNA"/>
</dbReference>
<dbReference type="EMBL" id="AC090826">
    <property type="status" value="NOT_ANNOTATED_CDS"/>
    <property type="molecule type" value="Genomic_DNA"/>
</dbReference>
<dbReference type="EMBL" id="BC101643">
    <property type="protein sequence ID" value="AAI01644.1"/>
    <property type="molecule type" value="mRNA"/>
</dbReference>
<dbReference type="EMBL" id="BC101647">
    <property type="protein sequence ID" value="AAI01648.1"/>
    <property type="molecule type" value="mRNA"/>
</dbReference>
<dbReference type="CCDS" id="CCDS10262.1">
    <molecule id="O75326-1"/>
</dbReference>
<dbReference type="CCDS" id="CCDS53959.1">
    <molecule id="O75326-2"/>
</dbReference>
<dbReference type="RefSeq" id="NP_001139501.1">
    <molecule id="O75326-2"/>
    <property type="nucleotide sequence ID" value="NM_001146029.3"/>
</dbReference>
<dbReference type="RefSeq" id="NP_001139502.1">
    <property type="nucleotide sequence ID" value="NM_001146030.2"/>
</dbReference>
<dbReference type="RefSeq" id="NP_003603.1">
    <molecule id="O75326-1"/>
    <property type="nucleotide sequence ID" value="NM_003612.5"/>
</dbReference>
<dbReference type="PDB" id="3NVQ">
    <property type="method" value="X-ray"/>
    <property type="resolution" value="2.40 A"/>
    <property type="chains" value="A/E=45-634"/>
</dbReference>
<dbReference type="PDBsum" id="3NVQ"/>
<dbReference type="SMR" id="O75326"/>
<dbReference type="BioGRID" id="114056">
    <property type="interactions" value="35"/>
</dbReference>
<dbReference type="CORUM" id="O75326"/>
<dbReference type="FunCoup" id="O75326">
    <property type="interactions" value="235"/>
</dbReference>
<dbReference type="IntAct" id="O75326">
    <property type="interactions" value="27"/>
</dbReference>
<dbReference type="MINT" id="O75326"/>
<dbReference type="STRING" id="9606.ENSP00000261918"/>
<dbReference type="GlyConnect" id="1977">
    <property type="glycosylation" value="7 N-Linked glycans (2 sites)"/>
</dbReference>
<dbReference type="GlyCosmos" id="O75326">
    <property type="glycosylation" value="6 sites, 7 glycans"/>
</dbReference>
<dbReference type="GlyGen" id="O75326">
    <property type="glycosylation" value="7 sites, 10 N-linked glycans (2 sites), 1 O-linked glycan (1 site)"/>
</dbReference>
<dbReference type="iPTMnet" id="O75326"/>
<dbReference type="PhosphoSitePlus" id="O75326"/>
<dbReference type="SwissPalm" id="O75326"/>
<dbReference type="BioMuta" id="SEMA7A"/>
<dbReference type="jPOST" id="O75326"/>
<dbReference type="MassIVE" id="O75326"/>
<dbReference type="PaxDb" id="9606-ENSP00000261918"/>
<dbReference type="PeptideAtlas" id="O75326"/>
<dbReference type="ProteomicsDB" id="25743"/>
<dbReference type="ProteomicsDB" id="49896">
    <molecule id="O75326-1"/>
</dbReference>
<dbReference type="Pumba" id="O75326"/>
<dbReference type="Antibodypedia" id="14570">
    <property type="antibodies" value="431 antibodies from 33 providers"/>
</dbReference>
<dbReference type="DNASU" id="8482"/>
<dbReference type="Ensembl" id="ENST00000261918.9">
    <molecule id="O75326-1"/>
    <property type="protein sequence ID" value="ENSP00000261918.4"/>
    <property type="gene ID" value="ENSG00000138623.10"/>
</dbReference>
<dbReference type="Ensembl" id="ENST00000543145.6">
    <molecule id="O75326-2"/>
    <property type="protein sequence ID" value="ENSP00000438966.2"/>
    <property type="gene ID" value="ENSG00000138623.10"/>
</dbReference>
<dbReference type="Ensembl" id="ENST00000671713.1">
    <molecule id="O75326-1"/>
    <property type="protein sequence ID" value="ENSP00000500448.1"/>
    <property type="gene ID" value="ENSG00000288455.1"/>
</dbReference>
<dbReference type="Ensembl" id="ENST00000672978.1">
    <molecule id="O75326-2"/>
    <property type="protein sequence ID" value="ENSP00000500204.1"/>
    <property type="gene ID" value="ENSG00000288455.1"/>
</dbReference>
<dbReference type="GeneID" id="8482"/>
<dbReference type="KEGG" id="hsa:8482"/>
<dbReference type="MANE-Select" id="ENST00000261918.9">
    <property type="protein sequence ID" value="ENSP00000261918.4"/>
    <property type="RefSeq nucleotide sequence ID" value="NM_003612.5"/>
    <property type="RefSeq protein sequence ID" value="NP_003603.1"/>
</dbReference>
<dbReference type="UCSC" id="uc002axv.4">
    <molecule id="O75326-1"/>
    <property type="organism name" value="human"/>
</dbReference>
<dbReference type="AGR" id="HGNC:10741"/>
<dbReference type="CTD" id="8482"/>
<dbReference type="DisGeNET" id="8482"/>
<dbReference type="GeneCards" id="SEMA7A"/>
<dbReference type="HGNC" id="HGNC:10741">
    <property type="gene designation" value="SEMA7A"/>
</dbReference>
<dbReference type="HPA" id="ENSG00000138623">
    <property type="expression patterns" value="Tissue enhanced (brain, lymphoid tissue)"/>
</dbReference>
<dbReference type="MalaCards" id="SEMA7A"/>
<dbReference type="MIM" id="607961">
    <property type="type" value="gene"/>
</dbReference>
<dbReference type="MIM" id="614745">
    <property type="type" value="phenotype"/>
</dbReference>
<dbReference type="MIM" id="619874">
    <property type="type" value="phenotype"/>
</dbReference>
<dbReference type="neXtProt" id="NX_O75326"/>
<dbReference type="OpenTargets" id="ENSG00000138623"/>
<dbReference type="PharmGKB" id="PA35663"/>
<dbReference type="VEuPathDB" id="HostDB:ENSG00000138623"/>
<dbReference type="eggNOG" id="KOG3611">
    <property type="taxonomic scope" value="Eukaryota"/>
</dbReference>
<dbReference type="GeneTree" id="ENSGT00940000158358"/>
<dbReference type="InParanoid" id="O75326"/>
<dbReference type="OMA" id="GYHMGLP"/>
<dbReference type="OrthoDB" id="9945363at2759"/>
<dbReference type="PAN-GO" id="O75326">
    <property type="GO annotations" value="17 GO annotations based on evolutionary models"/>
</dbReference>
<dbReference type="PhylomeDB" id="O75326"/>
<dbReference type="TreeFam" id="TF333698"/>
<dbReference type="PathwayCommons" id="O75326"/>
<dbReference type="Reactome" id="R-HSA-416700">
    <property type="pathway name" value="Other semaphorin interactions"/>
</dbReference>
<dbReference type="SignaLink" id="O75326"/>
<dbReference type="SIGNOR" id="O75326"/>
<dbReference type="BioGRID-ORCS" id="8482">
    <property type="hits" value="11 hits in 1156 CRISPR screens"/>
</dbReference>
<dbReference type="ChiTaRS" id="SEMA7A">
    <property type="organism name" value="human"/>
</dbReference>
<dbReference type="EvolutionaryTrace" id="O75326"/>
<dbReference type="GeneWiki" id="SEMA7A"/>
<dbReference type="GenomeRNAi" id="8482"/>
<dbReference type="Pharos" id="O75326">
    <property type="development level" value="Tbio"/>
</dbReference>
<dbReference type="PRO" id="PR:O75326"/>
<dbReference type="Proteomes" id="UP000005640">
    <property type="component" value="Chromosome 15"/>
</dbReference>
<dbReference type="RNAct" id="O75326">
    <property type="molecule type" value="protein"/>
</dbReference>
<dbReference type="Bgee" id="ENSG00000138623">
    <property type="expression patterns" value="Expressed in spleen and 98 other cell types or tissues"/>
</dbReference>
<dbReference type="ExpressionAtlas" id="O75326">
    <property type="expression patterns" value="baseline and differential"/>
</dbReference>
<dbReference type="GO" id="GO:0009897">
    <property type="term" value="C:external side of plasma membrane"/>
    <property type="evidence" value="ECO:0000250"/>
    <property type="project" value="UniProtKB"/>
</dbReference>
<dbReference type="GO" id="GO:0098982">
    <property type="term" value="C:GABA-ergic synapse"/>
    <property type="evidence" value="ECO:0007669"/>
    <property type="project" value="Ensembl"/>
</dbReference>
<dbReference type="GO" id="GO:0016020">
    <property type="term" value="C:membrane"/>
    <property type="evidence" value="ECO:0007005"/>
    <property type="project" value="UniProtKB"/>
</dbReference>
<dbReference type="GO" id="GO:0005886">
    <property type="term" value="C:plasma membrane"/>
    <property type="evidence" value="ECO:0000318"/>
    <property type="project" value="GO_Central"/>
</dbReference>
<dbReference type="GO" id="GO:0098793">
    <property type="term" value="C:presynapse"/>
    <property type="evidence" value="ECO:0007669"/>
    <property type="project" value="Ensembl"/>
</dbReference>
<dbReference type="GO" id="GO:0045499">
    <property type="term" value="F:chemorepellent activity"/>
    <property type="evidence" value="ECO:0000318"/>
    <property type="project" value="GO_Central"/>
</dbReference>
<dbReference type="GO" id="GO:0005178">
    <property type="term" value="F:integrin binding"/>
    <property type="evidence" value="ECO:0000318"/>
    <property type="project" value="GO_Central"/>
</dbReference>
<dbReference type="GO" id="GO:0030215">
    <property type="term" value="F:semaphorin receptor binding"/>
    <property type="evidence" value="ECO:0000318"/>
    <property type="project" value="GO_Central"/>
</dbReference>
<dbReference type="GO" id="GO:0048675">
    <property type="term" value="P:axon extension"/>
    <property type="evidence" value="ECO:0007669"/>
    <property type="project" value="Ensembl"/>
</dbReference>
<dbReference type="GO" id="GO:0007411">
    <property type="term" value="P:axon guidance"/>
    <property type="evidence" value="ECO:0000318"/>
    <property type="project" value="GO_Central"/>
</dbReference>
<dbReference type="GO" id="GO:0006955">
    <property type="term" value="P:immune response"/>
    <property type="evidence" value="ECO:0000304"/>
    <property type="project" value="ProtInc"/>
</dbReference>
<dbReference type="GO" id="GO:0006954">
    <property type="term" value="P:inflammatory response"/>
    <property type="evidence" value="ECO:0007669"/>
    <property type="project" value="UniProtKB-KW"/>
</dbReference>
<dbReference type="GO" id="GO:0007229">
    <property type="term" value="P:integrin-mediated signaling pathway"/>
    <property type="evidence" value="ECO:0000314"/>
    <property type="project" value="UniProtKB"/>
</dbReference>
<dbReference type="GO" id="GO:0050919">
    <property type="term" value="P:negative chemotaxis"/>
    <property type="evidence" value="ECO:0000318"/>
    <property type="project" value="GO_Central"/>
</dbReference>
<dbReference type="GO" id="GO:0001755">
    <property type="term" value="P:neural crest cell migration"/>
    <property type="evidence" value="ECO:0000318"/>
    <property type="project" value="GO_Central"/>
</dbReference>
<dbReference type="GO" id="GO:0021988">
    <property type="term" value="P:olfactory lobe development"/>
    <property type="evidence" value="ECO:0007669"/>
    <property type="project" value="Ensembl"/>
</dbReference>
<dbReference type="GO" id="GO:0001649">
    <property type="term" value="P:osteoblast differentiation"/>
    <property type="evidence" value="ECO:0007005"/>
    <property type="project" value="UniProtKB"/>
</dbReference>
<dbReference type="GO" id="GO:0045773">
    <property type="term" value="P:positive regulation of axon extension"/>
    <property type="evidence" value="ECO:0000314"/>
    <property type="project" value="UniProtKB"/>
</dbReference>
<dbReference type="GO" id="GO:0030335">
    <property type="term" value="P:positive regulation of cell migration"/>
    <property type="evidence" value="ECO:0000318"/>
    <property type="project" value="GO_Central"/>
</dbReference>
<dbReference type="GO" id="GO:0070374">
    <property type="term" value="P:positive regulation of ERK1 and ERK2 cascade"/>
    <property type="evidence" value="ECO:0000314"/>
    <property type="project" value="UniProtKB"/>
</dbReference>
<dbReference type="GO" id="GO:0060907">
    <property type="term" value="P:positive regulation of macrophage cytokine production"/>
    <property type="evidence" value="ECO:0000250"/>
    <property type="project" value="UniProtKB"/>
</dbReference>
<dbReference type="GO" id="GO:0050727">
    <property type="term" value="P:regulation of inflammatory response"/>
    <property type="evidence" value="ECO:0000250"/>
    <property type="project" value="UniProtKB"/>
</dbReference>
<dbReference type="GO" id="GO:0090128">
    <property type="term" value="P:regulation of synapse maturation"/>
    <property type="evidence" value="ECO:0007669"/>
    <property type="project" value="Ensembl"/>
</dbReference>
<dbReference type="GO" id="GO:0071526">
    <property type="term" value="P:semaphorin-plexin signaling pathway"/>
    <property type="evidence" value="ECO:0000318"/>
    <property type="project" value="GO_Central"/>
</dbReference>
<dbReference type="CDD" id="cd11243">
    <property type="entry name" value="Sema_7A"/>
    <property type="match status" value="1"/>
</dbReference>
<dbReference type="FunFam" id="3.30.1680.10:FF:000017">
    <property type="entry name" value="Semaphorin 7A"/>
    <property type="match status" value="1"/>
</dbReference>
<dbReference type="FunFam" id="2.130.10.10:FF:000223">
    <property type="entry name" value="semaphorin-7A isoform X1"/>
    <property type="match status" value="1"/>
</dbReference>
<dbReference type="FunFam" id="2.60.40.10:FF:000640">
    <property type="entry name" value="semaphorin-7A isoform X2"/>
    <property type="match status" value="1"/>
</dbReference>
<dbReference type="Gene3D" id="2.60.40.10">
    <property type="entry name" value="Immunoglobulins"/>
    <property type="match status" value="1"/>
</dbReference>
<dbReference type="Gene3D" id="3.30.1680.10">
    <property type="entry name" value="ligand-binding face of the semaphorins, domain 2"/>
    <property type="match status" value="1"/>
</dbReference>
<dbReference type="Gene3D" id="2.130.10.10">
    <property type="entry name" value="YVTN repeat-like/Quinoprotein amine dehydrogenase"/>
    <property type="match status" value="1"/>
</dbReference>
<dbReference type="InterPro" id="IPR007110">
    <property type="entry name" value="Ig-like_dom"/>
</dbReference>
<dbReference type="InterPro" id="IPR036179">
    <property type="entry name" value="Ig-like_dom_sf"/>
</dbReference>
<dbReference type="InterPro" id="IPR013783">
    <property type="entry name" value="Ig-like_fold"/>
</dbReference>
<dbReference type="InterPro" id="IPR002165">
    <property type="entry name" value="Plexin_repeat"/>
</dbReference>
<dbReference type="InterPro" id="IPR016201">
    <property type="entry name" value="PSI"/>
</dbReference>
<dbReference type="InterPro" id="IPR042824">
    <property type="entry name" value="Sema7A_sema"/>
</dbReference>
<dbReference type="InterPro" id="IPR001627">
    <property type="entry name" value="Semap_dom"/>
</dbReference>
<dbReference type="InterPro" id="IPR036352">
    <property type="entry name" value="Semap_dom_sf"/>
</dbReference>
<dbReference type="InterPro" id="IPR027231">
    <property type="entry name" value="Semaphorin"/>
</dbReference>
<dbReference type="InterPro" id="IPR015943">
    <property type="entry name" value="WD40/YVTN_repeat-like_dom_sf"/>
</dbReference>
<dbReference type="PANTHER" id="PTHR11036">
    <property type="entry name" value="SEMAPHORIN"/>
    <property type="match status" value="1"/>
</dbReference>
<dbReference type="PANTHER" id="PTHR11036:SF80">
    <property type="entry name" value="SEMAPHORIN-7A"/>
    <property type="match status" value="1"/>
</dbReference>
<dbReference type="Pfam" id="PF13895">
    <property type="entry name" value="Ig_2"/>
    <property type="match status" value="1"/>
</dbReference>
<dbReference type="Pfam" id="PF01437">
    <property type="entry name" value="PSI"/>
    <property type="match status" value="1"/>
</dbReference>
<dbReference type="Pfam" id="PF01403">
    <property type="entry name" value="Sema"/>
    <property type="match status" value="1"/>
</dbReference>
<dbReference type="SMART" id="SM00423">
    <property type="entry name" value="PSI"/>
    <property type="match status" value="1"/>
</dbReference>
<dbReference type="SMART" id="SM00630">
    <property type="entry name" value="Sema"/>
    <property type="match status" value="1"/>
</dbReference>
<dbReference type="SUPFAM" id="SSF48726">
    <property type="entry name" value="Immunoglobulin"/>
    <property type="match status" value="1"/>
</dbReference>
<dbReference type="SUPFAM" id="SSF103575">
    <property type="entry name" value="Plexin repeat"/>
    <property type="match status" value="1"/>
</dbReference>
<dbReference type="SUPFAM" id="SSF101912">
    <property type="entry name" value="Sema domain"/>
    <property type="match status" value="1"/>
</dbReference>
<dbReference type="PROSITE" id="PS50835">
    <property type="entry name" value="IG_LIKE"/>
    <property type="match status" value="1"/>
</dbReference>
<dbReference type="PROSITE" id="PS51004">
    <property type="entry name" value="SEMA"/>
    <property type="match status" value="1"/>
</dbReference>
<feature type="signal peptide" evidence="2">
    <location>
        <begin position="1"/>
        <end position="44"/>
    </location>
</feature>
<feature type="chain" id="PRO_0000032347" description="Semaphorin-7A">
    <location>
        <begin position="45"/>
        <end position="648"/>
    </location>
</feature>
<feature type="propeptide" id="PRO_0000032348" description="Removed in mature form" evidence="2">
    <location>
        <begin position="649"/>
        <end position="666"/>
    </location>
</feature>
<feature type="domain" description="Sema" evidence="3">
    <location>
        <begin position="53"/>
        <end position="490"/>
    </location>
</feature>
<feature type="domain" description="Ig-like C2-type">
    <location>
        <begin position="544"/>
        <end position="629"/>
    </location>
</feature>
<feature type="region of interest" description="Disordered" evidence="4">
    <location>
        <begin position="1"/>
        <end position="21"/>
    </location>
</feature>
<feature type="region of interest" description="Interaction with integrins">
    <location>
        <begin position="267"/>
        <end position="269"/>
    </location>
</feature>
<feature type="short sequence motif" description="Cell attachment site" evidence="2">
    <location>
        <begin position="267"/>
        <end position="269"/>
    </location>
</feature>
<feature type="compositionally biased region" description="Low complexity" evidence="4">
    <location>
        <begin position="9"/>
        <end position="21"/>
    </location>
</feature>
<feature type="modified residue" description="Asymmetric dimethylarginine" evidence="1">
    <location>
        <position position="135"/>
    </location>
</feature>
<feature type="lipid moiety-binding region" description="GPI-anchor amidated alanine" evidence="2">
    <location>
        <position position="648"/>
    </location>
</feature>
<feature type="glycosylation site" description="N-linked (GlcNAc...) asparagine" evidence="10">
    <location>
        <position position="105"/>
    </location>
</feature>
<feature type="glycosylation site" description="N-linked (GlcNAc...) asparagine" evidence="10">
    <location>
        <position position="157"/>
    </location>
</feature>
<feature type="glycosylation site" description="N-linked (GlcNAc...) asparagine" evidence="10">
    <location>
        <position position="258"/>
    </location>
</feature>
<feature type="glycosylation site" description="N-linked (GlcNAc...) asparagine" evidence="10">
    <location>
        <position position="330"/>
    </location>
</feature>
<feature type="glycosylation site" description="N-linked (GlcNAc...) asparagine" evidence="17">
    <location>
        <position position="602"/>
    </location>
</feature>
<feature type="disulfide bond" evidence="10">
    <location>
        <begin position="120"/>
        <end position="126"/>
    </location>
</feature>
<feature type="disulfide bond" evidence="10">
    <location>
        <begin position="143"/>
        <end position="152"/>
    </location>
</feature>
<feature type="disulfide bond" evidence="10">
    <location>
        <begin position="266"/>
        <end position="366"/>
    </location>
</feature>
<feature type="disulfide bond" evidence="10">
    <location>
        <begin position="291"/>
        <end position="335"/>
    </location>
</feature>
<feature type="disulfide bond" evidence="10">
    <location>
        <begin position="493"/>
        <end position="511"/>
    </location>
</feature>
<feature type="disulfide bond" evidence="10">
    <location>
        <begin position="500"/>
        <end position="541"/>
    </location>
</feature>
<feature type="disulfide bond" evidence="10">
    <location>
        <begin position="503"/>
        <end position="518"/>
    </location>
</feature>
<feature type="disulfide bond" evidence="10">
    <location>
        <begin position="566"/>
        <end position="613"/>
    </location>
</feature>
<feature type="disulfide bond" evidence="10">
    <location>
        <begin position="587"/>
        <end position="596"/>
    </location>
</feature>
<feature type="splice variant" id="VSP_045349" description="In isoform 2." evidence="15">
    <location>
        <begin position="111"/>
        <end position="124"/>
    </location>
</feature>
<feature type="sequence variant" id="VAR_029282" description="In dbSNP:rs16968733." evidence="14">
    <original>S</original>
    <variation>T</variation>
    <location>
        <position position="115"/>
    </location>
</feature>
<feature type="sequence variant" id="VAR_087326" description="In PFIC11." evidence="12">
    <original>R</original>
    <variation>W</variation>
    <location>
        <position position="148"/>
    </location>
</feature>
<feature type="sequence variant" id="VAR_038836" description="Results in JMH-variant phenotype; dbSNP:rs55637216." evidence="7">
    <original>R</original>
    <variation>Q</variation>
    <location>
        <position position="207"/>
    </location>
</feature>
<feature type="sequence variant" id="VAR_038837" description="Results in JMH-variant phenotype; dbSNP:rs56367230." evidence="7">
    <original>R</original>
    <variation>W</variation>
    <location>
        <position position="207"/>
    </location>
</feature>
<feature type="sequence variant" id="VAR_068679" description="Results in JMH-variant phenotype; dbSNP:rs387907241." evidence="11">
    <original>R</original>
    <variation>L</variation>
    <location>
        <position position="347"/>
    </location>
</feature>
<feature type="sequence variant" id="VAR_038838" description="Results in JMH-variant phenotype; dbSNP:rs56204206." evidence="7">
    <original>R</original>
    <variation>H</variation>
    <location>
        <position position="460"/>
    </location>
</feature>
<feature type="sequence variant" id="VAR_038839" description="Results in JMH-variant phenotype; dbSNP:rs56001514." evidence="7">
    <original>R</original>
    <variation>C</variation>
    <location>
        <position position="461"/>
    </location>
</feature>
<feature type="mutagenesis site" description="Abolishes ITGB1-dependent enhancement of axon growth; when associated with E-269." evidence="6">
    <original>R</original>
    <variation>K</variation>
    <location>
        <position position="267"/>
    </location>
</feature>
<feature type="mutagenesis site" description="Abolishes ITGB1-dependent enhancement of axon growth; when associated with K-267." evidence="6">
    <original>D</original>
    <variation>E</variation>
    <location>
        <position position="269"/>
    </location>
</feature>
<feature type="sequence conflict" description="In Ref. 5; BAG56808." evidence="16" ref="5">
    <original>K</original>
    <variation>E</variation>
    <location>
        <position position="545"/>
    </location>
</feature>
<feature type="turn" evidence="18">
    <location>
        <begin position="62"/>
        <end position="64"/>
    </location>
</feature>
<feature type="strand" evidence="18">
    <location>
        <begin position="65"/>
        <end position="68"/>
    </location>
</feature>
<feature type="strand" evidence="18">
    <location>
        <begin position="77"/>
        <end position="79"/>
    </location>
</feature>
<feature type="strand" evidence="18">
    <location>
        <begin position="85"/>
        <end position="90"/>
    </location>
</feature>
<feature type="strand" evidence="18">
    <location>
        <begin position="92"/>
        <end position="99"/>
    </location>
</feature>
<feature type="strand" evidence="18">
    <location>
        <begin position="110"/>
        <end position="112"/>
    </location>
</feature>
<feature type="strand" evidence="18">
    <location>
        <begin position="129"/>
        <end position="136"/>
    </location>
</feature>
<feature type="strand" evidence="18">
    <location>
        <begin position="139"/>
        <end position="144"/>
    </location>
</feature>
<feature type="turn" evidence="18">
    <location>
        <begin position="146"/>
        <end position="148"/>
    </location>
</feature>
<feature type="strand" evidence="18">
    <location>
        <begin position="151"/>
        <end position="158"/>
    </location>
</feature>
<feature type="strand" evidence="18">
    <location>
        <begin position="160"/>
        <end position="165"/>
    </location>
</feature>
<feature type="strand" evidence="18">
    <location>
        <begin position="180"/>
        <end position="183"/>
    </location>
</feature>
<feature type="strand" evidence="18">
    <location>
        <begin position="186"/>
        <end position="189"/>
    </location>
</feature>
<feature type="strand" evidence="18">
    <location>
        <begin position="204"/>
        <end position="210"/>
    </location>
</feature>
<feature type="strand" evidence="18">
    <location>
        <begin position="223"/>
        <end position="230"/>
    </location>
</feature>
<feature type="helix" evidence="18">
    <location>
        <begin position="235"/>
        <end position="237"/>
    </location>
</feature>
<feature type="strand" evidence="18">
    <location>
        <begin position="239"/>
        <end position="247"/>
    </location>
</feature>
<feature type="strand" evidence="18">
    <location>
        <begin position="257"/>
        <end position="266"/>
    </location>
</feature>
<feature type="strand" evidence="18">
    <location>
        <begin position="272"/>
        <end position="274"/>
    </location>
</feature>
<feature type="turn" evidence="18">
    <location>
        <begin position="275"/>
        <end position="279"/>
    </location>
</feature>
<feature type="strand" evidence="18">
    <location>
        <begin position="285"/>
        <end position="289"/>
    </location>
</feature>
<feature type="turn" evidence="18">
    <location>
        <begin position="294"/>
        <end position="296"/>
    </location>
</feature>
<feature type="strand" evidence="18">
    <location>
        <begin position="302"/>
        <end position="309"/>
    </location>
</feature>
<feature type="helix" evidence="18">
    <location>
        <begin position="316"/>
        <end position="318"/>
    </location>
</feature>
<feature type="strand" evidence="18">
    <location>
        <begin position="320"/>
        <end position="326"/>
    </location>
</feature>
<feature type="strand" evidence="18">
    <location>
        <begin position="332"/>
        <end position="338"/>
    </location>
</feature>
<feature type="helix" evidence="18">
    <location>
        <begin position="339"/>
        <end position="348"/>
    </location>
</feature>
<feature type="strand" evidence="18">
    <location>
        <begin position="368"/>
        <end position="370"/>
    </location>
</feature>
<feature type="helix" evidence="18">
    <location>
        <begin position="375"/>
        <end position="383"/>
    </location>
</feature>
<feature type="strand" evidence="18">
    <location>
        <begin position="386"/>
        <end position="389"/>
    </location>
</feature>
<feature type="strand" evidence="18">
    <location>
        <begin position="394"/>
        <end position="397"/>
    </location>
</feature>
<feature type="strand" evidence="18">
    <location>
        <begin position="401"/>
        <end position="406"/>
    </location>
</feature>
<feature type="strand" evidence="18">
    <location>
        <begin position="408"/>
        <end position="417"/>
    </location>
</feature>
<feature type="strand" evidence="18">
    <location>
        <begin position="423"/>
        <end position="431"/>
    </location>
</feature>
<feature type="strand" evidence="18">
    <location>
        <begin position="436"/>
        <end position="440"/>
    </location>
</feature>
<feature type="strand" evidence="18">
    <location>
        <begin position="451"/>
        <end position="456"/>
    </location>
</feature>
<feature type="strand" evidence="18">
    <location>
        <begin position="467"/>
        <end position="471"/>
    </location>
</feature>
<feature type="turn" evidence="18">
    <location>
        <begin position="472"/>
        <end position="475"/>
    </location>
</feature>
<feature type="strand" evidence="18">
    <location>
        <begin position="476"/>
        <end position="480"/>
    </location>
</feature>
<feature type="strand" evidence="18">
    <location>
        <begin position="482"/>
        <end position="489"/>
    </location>
</feature>
<feature type="helix" evidence="18">
    <location>
        <begin position="499"/>
        <end position="505"/>
    </location>
</feature>
<feature type="strand" evidence="18">
    <location>
        <begin position="511"/>
        <end position="514"/>
    </location>
</feature>
<feature type="strand" evidence="18">
    <location>
        <begin position="517"/>
        <end position="520"/>
    </location>
</feature>
<feature type="strand" evidence="18">
    <location>
        <begin position="523"/>
        <end position="526"/>
    </location>
</feature>
<feature type="strand" evidence="18">
    <location>
        <begin position="533"/>
        <end position="535"/>
    </location>
</feature>
<feature type="turn" evidence="18">
    <location>
        <begin position="537"/>
        <end position="540"/>
    </location>
</feature>
<feature type="strand" evidence="18">
    <location>
        <begin position="541"/>
        <end position="545"/>
    </location>
</feature>
<feature type="strand" evidence="18">
    <location>
        <begin position="551"/>
        <end position="556"/>
    </location>
</feature>
<feature type="strand" evidence="18">
    <location>
        <begin position="562"/>
        <end position="567"/>
    </location>
</feature>
<feature type="strand" evidence="18">
    <location>
        <begin position="573"/>
        <end position="579"/>
    </location>
</feature>
<feature type="strand" evidence="18">
    <location>
        <begin position="582"/>
        <end position="587"/>
    </location>
</feature>
<feature type="strand" evidence="18">
    <location>
        <begin position="592"/>
        <end position="602"/>
    </location>
</feature>
<feature type="strand" evidence="18">
    <location>
        <begin position="609"/>
        <end position="619"/>
    </location>
</feature>
<feature type="strand" evidence="18">
    <location>
        <begin position="621"/>
        <end position="631"/>
    </location>
</feature>
<name>SEM7A_HUMAN</name>
<keyword id="KW-0002">3D-structure</keyword>
<keyword id="KW-0025">Alternative splicing</keyword>
<keyword id="KW-1003">Cell membrane</keyword>
<keyword id="KW-0217">Developmental protein</keyword>
<keyword id="KW-0221">Differentiation</keyword>
<keyword id="KW-0225">Disease variant</keyword>
<keyword id="KW-1015">Disulfide bond</keyword>
<keyword id="KW-0325">Glycoprotein</keyword>
<keyword id="KW-0336">GPI-anchor</keyword>
<keyword id="KW-0393">Immunoglobulin domain</keyword>
<keyword id="KW-0395">Inflammatory response</keyword>
<keyword id="KW-0988">Intrahepatic cholestasis</keyword>
<keyword id="KW-0449">Lipoprotein</keyword>
<keyword id="KW-0472">Membrane</keyword>
<keyword id="KW-0488">Methylation</keyword>
<keyword id="KW-0524">Neurogenesis</keyword>
<keyword id="KW-1267">Proteomics identification</keyword>
<keyword id="KW-1185">Reference proteome</keyword>
<keyword id="KW-0732">Signal</keyword>
<organism>
    <name type="scientific">Homo sapiens</name>
    <name type="common">Human</name>
    <dbReference type="NCBI Taxonomy" id="9606"/>
    <lineage>
        <taxon>Eukaryota</taxon>
        <taxon>Metazoa</taxon>
        <taxon>Chordata</taxon>
        <taxon>Craniata</taxon>
        <taxon>Vertebrata</taxon>
        <taxon>Euteleostomi</taxon>
        <taxon>Mammalia</taxon>
        <taxon>Eutheria</taxon>
        <taxon>Euarchontoglires</taxon>
        <taxon>Primates</taxon>
        <taxon>Haplorrhini</taxon>
        <taxon>Catarrhini</taxon>
        <taxon>Hominidae</taxon>
        <taxon>Homo</taxon>
    </lineage>
</organism>
<protein>
    <recommendedName>
        <fullName>Semaphorin-7A</fullName>
    </recommendedName>
    <alternativeName>
        <fullName>CDw108</fullName>
    </alternativeName>
    <alternativeName>
        <fullName>JMH blood group antigen</fullName>
    </alternativeName>
    <alternativeName>
        <fullName>John-Milton-Hargen human blood group Ag</fullName>
    </alternativeName>
    <alternativeName>
        <fullName>Semaphorin-K1</fullName>
        <shortName>Sema K1</shortName>
    </alternativeName>
    <alternativeName>
        <fullName>Semaphorin-L</fullName>
        <shortName>Sema L</shortName>
    </alternativeName>
    <cdAntigenName>CD108</cdAntigenName>
</protein>
<proteinExistence type="evidence at protein level"/>
<sequence>MTPPPPGRAAPSAPRARVPGPPARLGLPLRLRLLLLLWAAAASAQGHLRSGPRIFAVWKGHVGQDRVDFGQTEPHTVLFHEPGSSSVWVGGRGKVYLFDFPEGKNASVRTVNIGSTKGSCLDKRDCENYITLLERRSEGLLACGTNARHPSCWNLVNGTVVPLGEMRGYAPFSPDENSLVLFEGDEVYSTIRKQEYNGKIPRFRRIRGESELYTSDTVMQNPQFIKATIVHQDQAYDDKIYYFFREDNPDKNPEAPLNVSRVAQLCRGDQGGESSLSVSKWNTFLKAMLVCSDAATNKNFNRLQDVFLLPDPSGQWRDTRVYGVFSNPWNYSAVCVYSLGDIDKVFRTSSLKGYHSSLPNPRPGKCLPDQQPIPTETFQVADRHPEVAQRVEPMGPLKTPLFHSKYHYQKVAVHRMQASHGETFHVLYLTTDRGTIHKVVEPGEQEHSFAFNIMEIQPFRRAAAIQTMSLDAERRKLYVSSQWEVSQVPLDLCEVYGGGCHGCLMSRDPYCGWDQGRCISIYSSERSVLQSINPAEPHKECPNPKPDKAPLQKVSLAPNSRYYLSCPMESRHATYSWRHKENVEQSCEPGHQSPNCILFIENLTAQQYGHYFCEAQEGSYFREAQHWQLLPEDGIMAEHLLGHACALAASLWLGVLPTLTLGLLVH</sequence>
<comment type="function">
    <text evidence="6 8 9">Plays an important role in integrin-mediated signaling and functions both in regulating cell migration and immune responses. Promotes formation of focal adhesion complexes, activation of the protein kinase PTK2/FAK1 and subsequent phosphorylation of MAPK1 and MAPK3. Promotes production of pro-inflammatory cytokines by monocytes and macrophages. Plays an important role in modulating inflammation and T-cell-mediated immune responses. Promotes axon growth in the embryonic olfactory bulb. Promotes attachment, spreading and dendrite outgrowth in melanocytes.</text>
</comment>
<comment type="subunit">
    <text evidence="6 8 9 10 16">Interacts with ITGA1 and ITGB1 (Probable). Interacts with PLXNC1.</text>
</comment>
<comment type="interaction">
    <interactant intactId="EBI-1753538">
        <id>O75326</id>
    </interactant>
    <interactant intactId="EBI-389883">
        <id>P16333</id>
        <label>NCK1</label>
    </interactant>
    <organismsDiffer>false</organismsDiffer>
    <experiments>2</experiments>
</comment>
<comment type="interaction">
    <interactant intactId="EBI-1753538">
        <id>O75326</id>
    </interactant>
    <interactant intactId="EBI-2927384">
        <id>O60486</id>
        <label>PLXNC1</label>
    </interactant>
    <organismsDiffer>false</organismsDiffer>
    <experiments>4</experiments>
</comment>
<comment type="subcellular location">
    <subcellularLocation>
        <location evidence="5 9 13">Cell membrane</location>
        <topology evidence="5 9 13">Lipid-anchor</topology>
        <topology evidence="5 9 13">GPI-anchor</topology>
        <orientation evidence="5 9 13">Extracellular side</orientation>
    </subcellularLocation>
    <text>Detected in a punctate pattern on the cell membrane of basal and supra-basal skin keratinocytes.</text>
</comment>
<comment type="alternative products">
    <event type="alternative splicing"/>
    <isoform>
        <id>O75326-1</id>
        <name>1</name>
        <sequence type="displayed"/>
    </isoform>
    <isoform>
        <id>O75326-2</id>
        <name>2</name>
        <sequence type="described" ref="VSP_045349"/>
    </isoform>
</comment>
<comment type="tissue specificity">
    <text evidence="5 9 13">Detected in skin keratinocytes and on endothelial cells from skin blood vessels (at protein level). Expressed in fibroblasts, keratinocytes, melanocytes, placenta, testis, ovary, spleen, brain, spinal cord, lung, heart, adrenal gland, lymph nodes, thymus, intestine and kidney.</text>
</comment>
<comment type="induction">
    <text evidence="9">Up-regulated in UV-irradiated fibroblasts, but not in UV-irradiated keratinocytes.</text>
</comment>
<comment type="polymorphism">
    <text evidence="7">Genetic variations in SEMA7A define the John Milton Hagen blood group system (JMH) [MIM:614745]. Three different JMH phenotypes have been identified based on the presence or absence of the high-frequency JMH antigen: JMH-weak, JMH-negative, and JMH-variant. The JMH-weak and -negative phenotypes can be either acquired or inherited and are characterized by a reduction or complete loss of JMH expression on red blood cells. Individuals with the JMH-variant phenotype are usually JMH-positive and have alloantibodies compatible with JMH-negative red blood cells. The JMH-variant phenotype results from rare SEMA7A missense variants.</text>
</comment>
<comment type="disease" evidence="12">
    <disease id="DI-06419">
        <name>Cholestasis, progressive familial intrahepatic, 11</name>
        <acronym>PFIC11</acronym>
        <description>An autosomal recessive form of progressive cholestasis, a disorder characterized by early onset of cholestasis that progresses to hepatic fibrosis, cirrhosis, and end-stage liver disease.</description>
        <dbReference type="MIM" id="619874"/>
    </disease>
    <text>The disease is caused by variants affecting the gene represented in this entry.</text>
</comment>
<comment type="similarity">
    <text evidence="16">Belongs to the semaphorin family.</text>
</comment>
<gene>
    <name type="primary">SEMA7A</name>
    <name type="synonym">CD108</name>
    <name type="synonym">SEMAL</name>
</gene>
<accession>O75326</accession>
<accession>B4DDP7</accession>
<accession>F5H1S0</accession>
<accession>Q1XE81</accession>
<accession>Q1XE82</accession>
<accession>Q1XE83</accession>
<accession>Q1XE84</accession>
<accession>Q3MIY5</accession>